<reference key="1">
    <citation type="journal article" date="2001" name="J. Bacteriol.">
        <title>Genome of the bacterium Streptococcus pneumoniae strain R6.</title>
        <authorList>
            <person name="Hoskins J."/>
            <person name="Alborn W.E. Jr."/>
            <person name="Arnold J."/>
            <person name="Blaszczak L.C."/>
            <person name="Burgett S."/>
            <person name="DeHoff B.S."/>
            <person name="Estrem S.T."/>
            <person name="Fritz L."/>
            <person name="Fu D.-J."/>
            <person name="Fuller W."/>
            <person name="Geringer C."/>
            <person name="Gilmour R."/>
            <person name="Glass J.S."/>
            <person name="Khoja H."/>
            <person name="Kraft A.R."/>
            <person name="Lagace R.E."/>
            <person name="LeBlanc D.J."/>
            <person name="Lee L.N."/>
            <person name="Lefkowitz E.J."/>
            <person name="Lu J."/>
            <person name="Matsushima P."/>
            <person name="McAhren S.M."/>
            <person name="McHenney M."/>
            <person name="McLeaster K."/>
            <person name="Mundy C.W."/>
            <person name="Nicas T.I."/>
            <person name="Norris F.H."/>
            <person name="O'Gara M."/>
            <person name="Peery R.B."/>
            <person name="Robertson G.T."/>
            <person name="Rockey P."/>
            <person name="Sun P.-M."/>
            <person name="Winkler M.E."/>
            <person name="Yang Y."/>
            <person name="Young-Bellido M."/>
            <person name="Zhao G."/>
            <person name="Zook C.A."/>
            <person name="Baltz R.H."/>
            <person name="Jaskunas S.R."/>
            <person name="Rosteck P.R. Jr."/>
            <person name="Skatrud P.L."/>
            <person name="Glass J.I."/>
        </authorList>
    </citation>
    <scope>NUCLEOTIDE SEQUENCE [LARGE SCALE GENOMIC DNA]</scope>
    <source>
        <strain>ATCC BAA-255 / R6</strain>
    </source>
</reference>
<gene>
    <name evidence="1" type="primary">uppS</name>
    <name type="ordered locus">spr0240</name>
</gene>
<keyword id="KW-0002">3D-structure</keyword>
<keyword id="KW-0460">Magnesium</keyword>
<keyword id="KW-0479">Metal-binding</keyword>
<keyword id="KW-1185">Reference proteome</keyword>
<keyword id="KW-0808">Transferase</keyword>
<comment type="function">
    <text evidence="1">Catalyzes the condensation of isopentenyl diphosphate (IPP) with allylic pyrophosphates generating different type of terpenoids.</text>
</comment>
<comment type="cofactor">
    <cofactor evidence="1">
        <name>Mg(2+)</name>
        <dbReference type="ChEBI" id="CHEBI:18420"/>
    </cofactor>
    <text evidence="1">Binds 2 magnesium ions per subunit.</text>
</comment>
<comment type="subunit">
    <text evidence="1">Homodimer.</text>
</comment>
<comment type="similarity">
    <text evidence="1">Belongs to the UPP synthase family.</text>
</comment>
<comment type="sequence caution" evidence="2">
    <conflict type="erroneous initiation">
        <sequence resource="EMBL-CDS" id="AAK99044"/>
    </conflict>
    <text>Extended N-terminus.</text>
</comment>
<organism>
    <name type="scientific">Streptococcus pneumoniae (strain ATCC BAA-255 / R6)</name>
    <dbReference type="NCBI Taxonomy" id="171101"/>
    <lineage>
        <taxon>Bacteria</taxon>
        <taxon>Bacillati</taxon>
        <taxon>Bacillota</taxon>
        <taxon>Bacilli</taxon>
        <taxon>Lactobacillales</taxon>
        <taxon>Streptococcaceae</taxon>
        <taxon>Streptococcus</taxon>
    </lineage>
</organism>
<sequence>MFGFFKKDKAVEVEVPTQVPAHIGIIMDGNGRWAKKRMQPRVFGHKAGMEALQTVTKAANKLGVKVITVYAFSTENWTRPDQEVKFIMNLPVEFYDNYVPELHANNVKIQMIGETDRLPKQTFEALTKAEELTKNNTGLILNFALNYGGRAEITQALKLISQDVLDAKINPGDITEELIGNYLFTQHLPKDLRDPDLIIRTSGELRLSNFLPWQGAYSELYFTDTLWPDFDEAALQEAILAYNRRHRRFGGV</sequence>
<feature type="chain" id="PRO_0000123691" description="Isoprenyl transferase">
    <location>
        <begin position="1"/>
        <end position="252"/>
    </location>
</feature>
<feature type="active site" evidence="1">
    <location>
        <position position="28"/>
    </location>
</feature>
<feature type="active site" description="Proton acceptor" evidence="1">
    <location>
        <position position="76"/>
    </location>
</feature>
<feature type="binding site" evidence="1">
    <location>
        <position position="28"/>
    </location>
    <ligand>
        <name>Mg(2+)</name>
        <dbReference type="ChEBI" id="CHEBI:18420"/>
    </ligand>
</feature>
<feature type="binding site" evidence="1">
    <location>
        <begin position="29"/>
        <end position="32"/>
    </location>
    <ligand>
        <name>substrate</name>
    </ligand>
</feature>
<feature type="binding site" evidence="1">
    <location>
        <position position="33"/>
    </location>
    <ligand>
        <name>substrate</name>
    </ligand>
</feature>
<feature type="binding site" evidence="1">
    <location>
        <position position="41"/>
    </location>
    <ligand>
        <name>substrate</name>
    </ligand>
</feature>
<feature type="binding site" evidence="1">
    <location>
        <position position="45"/>
    </location>
    <ligand>
        <name>substrate</name>
    </ligand>
</feature>
<feature type="binding site" evidence="1">
    <location>
        <begin position="73"/>
        <end position="75"/>
    </location>
    <ligand>
        <name>substrate</name>
    </ligand>
</feature>
<feature type="binding site" evidence="1">
    <location>
        <position position="77"/>
    </location>
    <ligand>
        <name>substrate</name>
    </ligand>
</feature>
<feature type="binding site" evidence="1">
    <location>
        <position position="79"/>
    </location>
    <ligand>
        <name>substrate</name>
    </ligand>
</feature>
<feature type="binding site" evidence="1">
    <location>
        <position position="200"/>
    </location>
    <ligand>
        <name>substrate</name>
    </ligand>
</feature>
<feature type="binding site" evidence="1">
    <location>
        <begin position="206"/>
        <end position="208"/>
    </location>
    <ligand>
        <name>substrate</name>
    </ligand>
</feature>
<feature type="binding site" evidence="1">
    <location>
        <position position="219"/>
    </location>
    <ligand>
        <name>Mg(2+)</name>
        <dbReference type="ChEBI" id="CHEBI:18420"/>
    </ligand>
</feature>
<feature type="strand" evidence="3">
    <location>
        <begin position="21"/>
        <end position="26"/>
    </location>
</feature>
<feature type="helix" evidence="3">
    <location>
        <begin position="30"/>
        <end position="35"/>
    </location>
</feature>
<feature type="turn" evidence="3">
    <location>
        <begin position="36"/>
        <end position="38"/>
    </location>
</feature>
<feature type="helix" evidence="3">
    <location>
        <begin position="41"/>
        <end position="62"/>
    </location>
</feature>
<feature type="strand" evidence="3">
    <location>
        <begin position="66"/>
        <end position="73"/>
    </location>
</feature>
<feature type="helix" evidence="3">
    <location>
        <begin position="74"/>
        <end position="78"/>
    </location>
</feature>
<feature type="helix" evidence="3">
    <location>
        <begin position="81"/>
        <end position="93"/>
    </location>
</feature>
<feature type="helix" evidence="3">
    <location>
        <begin position="95"/>
        <end position="104"/>
    </location>
</feature>
<feature type="strand" evidence="3">
    <location>
        <begin position="108"/>
        <end position="113"/>
    </location>
</feature>
<feature type="helix" evidence="3">
    <location>
        <begin position="115"/>
        <end position="117"/>
    </location>
</feature>
<feature type="helix" evidence="3">
    <location>
        <begin position="120"/>
        <end position="133"/>
    </location>
</feature>
<feature type="strand" evidence="3">
    <location>
        <begin position="140"/>
        <end position="147"/>
    </location>
</feature>
<feature type="helix" evidence="3">
    <location>
        <begin position="149"/>
        <end position="165"/>
    </location>
</feature>
<feature type="helix" evidence="3">
    <location>
        <begin position="171"/>
        <end position="173"/>
    </location>
</feature>
<feature type="helix" evidence="3">
    <location>
        <begin position="176"/>
        <end position="180"/>
    </location>
</feature>
<feature type="helix" evidence="3">
    <location>
        <begin position="184"/>
        <end position="187"/>
    </location>
</feature>
<feature type="helix" evidence="3">
    <location>
        <begin position="190"/>
        <end position="192"/>
    </location>
</feature>
<feature type="strand" evidence="3">
    <location>
        <begin position="196"/>
        <end position="200"/>
    </location>
</feature>
<feature type="strand" evidence="3">
    <location>
        <begin position="209"/>
        <end position="211"/>
    </location>
</feature>
<feature type="turn" evidence="3">
    <location>
        <begin position="212"/>
        <end position="217"/>
    </location>
</feature>
<feature type="strand" evidence="3">
    <location>
        <begin position="219"/>
        <end position="222"/>
    </location>
</feature>
<feature type="helix" evidence="3">
    <location>
        <begin position="227"/>
        <end position="229"/>
    </location>
</feature>
<feature type="helix" evidence="3">
    <location>
        <begin position="232"/>
        <end position="243"/>
    </location>
</feature>
<proteinExistence type="evidence at protein level"/>
<accession>Q8DRB3</accession>
<name>ISPT_STRR6</name>
<protein>
    <recommendedName>
        <fullName evidence="1">Isoprenyl transferase</fullName>
        <ecNumber evidence="1">2.5.1.-</ecNumber>
    </recommendedName>
</protein>
<dbReference type="EC" id="2.5.1.-" evidence="1"/>
<dbReference type="EMBL" id="AE007317">
    <property type="protein sequence ID" value="AAK99044.1"/>
    <property type="status" value="ALT_INIT"/>
    <property type="molecule type" value="Genomic_DNA"/>
</dbReference>
<dbReference type="PIR" id="H97901">
    <property type="entry name" value="H97901"/>
</dbReference>
<dbReference type="RefSeq" id="NP_357834.1">
    <property type="nucleotide sequence ID" value="NC_003098.1"/>
</dbReference>
<dbReference type="RefSeq" id="WP_000466719.1">
    <property type="nucleotide sequence ID" value="NC_003098.1"/>
</dbReference>
<dbReference type="PDB" id="4Q9M">
    <property type="method" value="X-ray"/>
    <property type="resolution" value="2.06 A"/>
    <property type="chains" value="A/B=10-252"/>
</dbReference>
<dbReference type="PDB" id="4Q9O">
    <property type="method" value="X-ray"/>
    <property type="resolution" value="2.20 A"/>
    <property type="chains" value="A/B=10-252"/>
</dbReference>
<dbReference type="PDBsum" id="4Q9M"/>
<dbReference type="PDBsum" id="4Q9O"/>
<dbReference type="SMR" id="Q8DRB3"/>
<dbReference type="STRING" id="171101.spr0240"/>
<dbReference type="KEGG" id="spr:spr0240"/>
<dbReference type="PATRIC" id="fig|171101.6.peg.274"/>
<dbReference type="eggNOG" id="COG0020">
    <property type="taxonomic scope" value="Bacteria"/>
</dbReference>
<dbReference type="HOGENOM" id="CLU_038505_1_1_9"/>
<dbReference type="BRENDA" id="2.5.1.31">
    <property type="organism ID" value="1960"/>
</dbReference>
<dbReference type="EvolutionaryTrace" id="Q8DRB3"/>
<dbReference type="Proteomes" id="UP000000586">
    <property type="component" value="Chromosome"/>
</dbReference>
<dbReference type="GO" id="GO:0005829">
    <property type="term" value="C:cytosol"/>
    <property type="evidence" value="ECO:0000318"/>
    <property type="project" value="GO_Central"/>
</dbReference>
<dbReference type="GO" id="GO:0008834">
    <property type="term" value="F:ditrans,polycis-undecaprenyl-diphosphate synthase [(2E,6E)-farnesyl-diphosphate specific] activity"/>
    <property type="evidence" value="ECO:0000318"/>
    <property type="project" value="GO_Central"/>
</dbReference>
<dbReference type="GO" id="GO:0000287">
    <property type="term" value="F:magnesium ion binding"/>
    <property type="evidence" value="ECO:0000318"/>
    <property type="project" value="GO_Central"/>
</dbReference>
<dbReference type="GO" id="GO:0030145">
    <property type="term" value="F:manganese ion binding"/>
    <property type="evidence" value="ECO:0000318"/>
    <property type="project" value="GO_Central"/>
</dbReference>
<dbReference type="GO" id="GO:0016094">
    <property type="term" value="P:polyprenol biosynthetic process"/>
    <property type="evidence" value="ECO:0000318"/>
    <property type="project" value="GO_Central"/>
</dbReference>
<dbReference type="CDD" id="cd00475">
    <property type="entry name" value="Cis_IPPS"/>
    <property type="match status" value="1"/>
</dbReference>
<dbReference type="FunFam" id="3.40.1180.10:FF:000001">
    <property type="entry name" value="(2E,6E)-farnesyl-diphosphate-specific ditrans,polycis-undecaprenyl-diphosphate synthase"/>
    <property type="match status" value="1"/>
</dbReference>
<dbReference type="Gene3D" id="3.40.1180.10">
    <property type="entry name" value="Decaprenyl diphosphate synthase-like"/>
    <property type="match status" value="1"/>
</dbReference>
<dbReference type="HAMAP" id="MF_01139">
    <property type="entry name" value="ISPT"/>
    <property type="match status" value="1"/>
</dbReference>
<dbReference type="InterPro" id="IPR001441">
    <property type="entry name" value="UPP_synth-like"/>
</dbReference>
<dbReference type="InterPro" id="IPR018520">
    <property type="entry name" value="UPP_synth-like_CS"/>
</dbReference>
<dbReference type="InterPro" id="IPR036424">
    <property type="entry name" value="UPP_synth-like_sf"/>
</dbReference>
<dbReference type="NCBIfam" id="NF011405">
    <property type="entry name" value="PRK14830.1"/>
    <property type="match status" value="1"/>
</dbReference>
<dbReference type="NCBIfam" id="TIGR00055">
    <property type="entry name" value="uppS"/>
    <property type="match status" value="1"/>
</dbReference>
<dbReference type="PANTHER" id="PTHR10291:SF0">
    <property type="entry name" value="DEHYDRODOLICHYL DIPHOSPHATE SYNTHASE 2"/>
    <property type="match status" value="1"/>
</dbReference>
<dbReference type="PANTHER" id="PTHR10291">
    <property type="entry name" value="DEHYDRODOLICHYL DIPHOSPHATE SYNTHASE FAMILY MEMBER"/>
    <property type="match status" value="1"/>
</dbReference>
<dbReference type="Pfam" id="PF01255">
    <property type="entry name" value="Prenyltransf"/>
    <property type="match status" value="1"/>
</dbReference>
<dbReference type="SUPFAM" id="SSF64005">
    <property type="entry name" value="Undecaprenyl diphosphate synthase"/>
    <property type="match status" value="1"/>
</dbReference>
<dbReference type="PROSITE" id="PS01066">
    <property type="entry name" value="UPP_SYNTHASE"/>
    <property type="match status" value="1"/>
</dbReference>
<evidence type="ECO:0000255" key="1">
    <source>
        <dbReference type="HAMAP-Rule" id="MF_01139"/>
    </source>
</evidence>
<evidence type="ECO:0000305" key="2"/>
<evidence type="ECO:0007829" key="3">
    <source>
        <dbReference type="PDB" id="4Q9M"/>
    </source>
</evidence>